<feature type="chain" id="PRO_0000242341" description="Large ribosomal subunit protein uL4">
    <location>
        <begin position="1"/>
        <end position="207"/>
    </location>
</feature>
<feature type="region of interest" description="Disordered" evidence="2">
    <location>
        <begin position="45"/>
        <end position="89"/>
    </location>
</feature>
<feature type="compositionally biased region" description="Basic residues" evidence="2">
    <location>
        <begin position="60"/>
        <end position="71"/>
    </location>
</feature>
<accession>Q6HPQ7</accession>
<dbReference type="EMBL" id="AE017355">
    <property type="protein sequence ID" value="AAT58920.1"/>
    <property type="molecule type" value="Genomic_DNA"/>
</dbReference>
<dbReference type="RefSeq" id="WP_001127258.1">
    <property type="nucleotide sequence ID" value="NC_005957.1"/>
</dbReference>
<dbReference type="RefSeq" id="YP_034463.1">
    <property type="nucleotide sequence ID" value="NC_005957.1"/>
</dbReference>
<dbReference type="SMR" id="Q6HPQ7"/>
<dbReference type="GeneID" id="93010942"/>
<dbReference type="KEGG" id="btk:BT9727_0107"/>
<dbReference type="PATRIC" id="fig|281309.8.peg.108"/>
<dbReference type="HOGENOM" id="CLU_041575_5_2_9"/>
<dbReference type="PRO" id="PR:Q6HPQ7"/>
<dbReference type="Proteomes" id="UP000001301">
    <property type="component" value="Chromosome"/>
</dbReference>
<dbReference type="GO" id="GO:1990904">
    <property type="term" value="C:ribonucleoprotein complex"/>
    <property type="evidence" value="ECO:0007669"/>
    <property type="project" value="UniProtKB-KW"/>
</dbReference>
<dbReference type="GO" id="GO:0005840">
    <property type="term" value="C:ribosome"/>
    <property type="evidence" value="ECO:0007669"/>
    <property type="project" value="UniProtKB-KW"/>
</dbReference>
<dbReference type="GO" id="GO:0019843">
    <property type="term" value="F:rRNA binding"/>
    <property type="evidence" value="ECO:0007669"/>
    <property type="project" value="UniProtKB-UniRule"/>
</dbReference>
<dbReference type="GO" id="GO:0003735">
    <property type="term" value="F:structural constituent of ribosome"/>
    <property type="evidence" value="ECO:0007669"/>
    <property type="project" value="InterPro"/>
</dbReference>
<dbReference type="GO" id="GO:0006412">
    <property type="term" value="P:translation"/>
    <property type="evidence" value="ECO:0007669"/>
    <property type="project" value="UniProtKB-UniRule"/>
</dbReference>
<dbReference type="FunFam" id="3.40.1370.10:FF:000003">
    <property type="entry name" value="50S ribosomal protein L4"/>
    <property type="match status" value="1"/>
</dbReference>
<dbReference type="Gene3D" id="3.40.1370.10">
    <property type="match status" value="1"/>
</dbReference>
<dbReference type="HAMAP" id="MF_01328_B">
    <property type="entry name" value="Ribosomal_uL4_B"/>
    <property type="match status" value="1"/>
</dbReference>
<dbReference type="InterPro" id="IPR002136">
    <property type="entry name" value="Ribosomal_uL4"/>
</dbReference>
<dbReference type="InterPro" id="IPR013005">
    <property type="entry name" value="Ribosomal_uL4-like"/>
</dbReference>
<dbReference type="InterPro" id="IPR023574">
    <property type="entry name" value="Ribosomal_uL4_dom_sf"/>
</dbReference>
<dbReference type="NCBIfam" id="TIGR03953">
    <property type="entry name" value="rplD_bact"/>
    <property type="match status" value="1"/>
</dbReference>
<dbReference type="PANTHER" id="PTHR10746">
    <property type="entry name" value="50S RIBOSOMAL PROTEIN L4"/>
    <property type="match status" value="1"/>
</dbReference>
<dbReference type="PANTHER" id="PTHR10746:SF6">
    <property type="entry name" value="LARGE RIBOSOMAL SUBUNIT PROTEIN UL4M"/>
    <property type="match status" value="1"/>
</dbReference>
<dbReference type="Pfam" id="PF00573">
    <property type="entry name" value="Ribosomal_L4"/>
    <property type="match status" value="1"/>
</dbReference>
<dbReference type="SUPFAM" id="SSF52166">
    <property type="entry name" value="Ribosomal protein L4"/>
    <property type="match status" value="1"/>
</dbReference>
<organism>
    <name type="scientific">Bacillus thuringiensis subsp. konkukian (strain 97-27)</name>
    <dbReference type="NCBI Taxonomy" id="281309"/>
    <lineage>
        <taxon>Bacteria</taxon>
        <taxon>Bacillati</taxon>
        <taxon>Bacillota</taxon>
        <taxon>Bacilli</taxon>
        <taxon>Bacillales</taxon>
        <taxon>Bacillaceae</taxon>
        <taxon>Bacillus</taxon>
        <taxon>Bacillus cereus group</taxon>
    </lineage>
</organism>
<name>RL4_BACHK</name>
<comment type="function">
    <text evidence="1">One of the primary rRNA binding proteins, this protein initially binds near the 5'-end of the 23S rRNA. It is important during the early stages of 50S assembly. It makes multiple contacts with different domains of the 23S rRNA in the assembled 50S subunit and ribosome.</text>
</comment>
<comment type="function">
    <text evidence="1">Forms part of the polypeptide exit tunnel.</text>
</comment>
<comment type="subunit">
    <text evidence="1">Part of the 50S ribosomal subunit.</text>
</comment>
<comment type="similarity">
    <text evidence="1">Belongs to the universal ribosomal protein uL4 family.</text>
</comment>
<proteinExistence type="inferred from homology"/>
<sequence>MPKVTVYNQTGSQVGEIELAEAIFGIEPNEAVLFEAVMMQRASLRQGTHKVKTRSEVRGGGRKPWRQKGTGRARQGSIRSPQWRGGGTVFGPTPRSYAYKLPKKVRRLAIKSALATKVVENNIVVLEDLVLNAPKTKDMLAVLKGLTVEKKALIVTADANESVELSARNIPGVTVITADGVNVLDVLHHDKLIMTKAAVEKVEEVLA</sequence>
<gene>
    <name evidence="1" type="primary">rplD</name>
    <name type="ordered locus">BT9727_0107</name>
</gene>
<protein>
    <recommendedName>
        <fullName evidence="1">Large ribosomal subunit protein uL4</fullName>
    </recommendedName>
    <alternativeName>
        <fullName evidence="3">50S ribosomal protein L4</fullName>
    </alternativeName>
</protein>
<reference key="1">
    <citation type="journal article" date="2006" name="J. Bacteriol.">
        <title>Pathogenomic sequence analysis of Bacillus cereus and Bacillus thuringiensis isolates closely related to Bacillus anthracis.</title>
        <authorList>
            <person name="Han C.S."/>
            <person name="Xie G."/>
            <person name="Challacombe J.F."/>
            <person name="Altherr M.R."/>
            <person name="Bhotika S.S."/>
            <person name="Bruce D."/>
            <person name="Campbell C.S."/>
            <person name="Campbell M.L."/>
            <person name="Chen J."/>
            <person name="Chertkov O."/>
            <person name="Cleland C."/>
            <person name="Dimitrijevic M."/>
            <person name="Doggett N.A."/>
            <person name="Fawcett J.J."/>
            <person name="Glavina T."/>
            <person name="Goodwin L.A."/>
            <person name="Hill K.K."/>
            <person name="Hitchcock P."/>
            <person name="Jackson P.J."/>
            <person name="Keim P."/>
            <person name="Kewalramani A.R."/>
            <person name="Longmire J."/>
            <person name="Lucas S."/>
            <person name="Malfatti S."/>
            <person name="McMurry K."/>
            <person name="Meincke L.J."/>
            <person name="Misra M."/>
            <person name="Moseman B.L."/>
            <person name="Mundt M."/>
            <person name="Munk A.C."/>
            <person name="Okinaka R.T."/>
            <person name="Parson-Quintana B."/>
            <person name="Reilly L.P."/>
            <person name="Richardson P."/>
            <person name="Robinson D.L."/>
            <person name="Rubin E."/>
            <person name="Saunders E."/>
            <person name="Tapia R."/>
            <person name="Tesmer J.G."/>
            <person name="Thayer N."/>
            <person name="Thompson L.S."/>
            <person name="Tice H."/>
            <person name="Ticknor L.O."/>
            <person name="Wills P.L."/>
            <person name="Brettin T.S."/>
            <person name="Gilna P."/>
        </authorList>
    </citation>
    <scope>NUCLEOTIDE SEQUENCE [LARGE SCALE GENOMIC DNA]</scope>
    <source>
        <strain>97-27</strain>
    </source>
</reference>
<keyword id="KW-0687">Ribonucleoprotein</keyword>
<keyword id="KW-0689">Ribosomal protein</keyword>
<keyword id="KW-0694">RNA-binding</keyword>
<keyword id="KW-0699">rRNA-binding</keyword>
<evidence type="ECO:0000255" key="1">
    <source>
        <dbReference type="HAMAP-Rule" id="MF_01328"/>
    </source>
</evidence>
<evidence type="ECO:0000256" key="2">
    <source>
        <dbReference type="SAM" id="MobiDB-lite"/>
    </source>
</evidence>
<evidence type="ECO:0000305" key="3"/>